<accession>Q12PT7</accession>
<protein>
    <recommendedName>
        <fullName evidence="1">Dual-specificity RNA methyltransferase RlmN</fullName>
        <ecNumber evidence="1">2.1.1.192</ecNumber>
    </recommendedName>
    <alternativeName>
        <fullName evidence="1">23S rRNA (adenine(2503)-C(2))-methyltransferase</fullName>
    </alternativeName>
    <alternativeName>
        <fullName evidence="1">23S rRNA m2A2503 methyltransferase</fullName>
    </alternativeName>
    <alternativeName>
        <fullName evidence="1">Ribosomal RNA large subunit methyltransferase N</fullName>
    </alternativeName>
    <alternativeName>
        <fullName evidence="1">tRNA (adenine(37)-C(2))-methyltransferase</fullName>
    </alternativeName>
    <alternativeName>
        <fullName evidence="1">tRNA m2A37 methyltransferase</fullName>
    </alternativeName>
</protein>
<name>RLMN_SHEDO</name>
<proteinExistence type="inferred from homology"/>
<gene>
    <name evidence="1" type="primary">rlmN</name>
    <name type="ordered locus">Sden_1253</name>
</gene>
<comment type="function">
    <text evidence="1">Specifically methylates position 2 of adenine 2503 in 23S rRNA and position 2 of adenine 37 in tRNAs. m2A2503 modification seems to play a crucial role in the proofreading step occurring at the peptidyl transferase center and thus would serve to optimize ribosomal fidelity.</text>
</comment>
<comment type="catalytic activity">
    <reaction evidence="1">
        <text>adenosine(2503) in 23S rRNA + 2 reduced [2Fe-2S]-[ferredoxin] + 2 S-adenosyl-L-methionine = 2-methyladenosine(2503) in 23S rRNA + 5'-deoxyadenosine + L-methionine + 2 oxidized [2Fe-2S]-[ferredoxin] + S-adenosyl-L-homocysteine</text>
        <dbReference type="Rhea" id="RHEA:42916"/>
        <dbReference type="Rhea" id="RHEA-COMP:10000"/>
        <dbReference type="Rhea" id="RHEA-COMP:10001"/>
        <dbReference type="Rhea" id="RHEA-COMP:10152"/>
        <dbReference type="Rhea" id="RHEA-COMP:10282"/>
        <dbReference type="ChEBI" id="CHEBI:17319"/>
        <dbReference type="ChEBI" id="CHEBI:33737"/>
        <dbReference type="ChEBI" id="CHEBI:33738"/>
        <dbReference type="ChEBI" id="CHEBI:57844"/>
        <dbReference type="ChEBI" id="CHEBI:57856"/>
        <dbReference type="ChEBI" id="CHEBI:59789"/>
        <dbReference type="ChEBI" id="CHEBI:74411"/>
        <dbReference type="ChEBI" id="CHEBI:74497"/>
        <dbReference type="EC" id="2.1.1.192"/>
    </reaction>
</comment>
<comment type="catalytic activity">
    <reaction evidence="1">
        <text>adenosine(37) in tRNA + 2 reduced [2Fe-2S]-[ferredoxin] + 2 S-adenosyl-L-methionine = 2-methyladenosine(37) in tRNA + 5'-deoxyadenosine + L-methionine + 2 oxidized [2Fe-2S]-[ferredoxin] + S-adenosyl-L-homocysteine</text>
        <dbReference type="Rhea" id="RHEA:43332"/>
        <dbReference type="Rhea" id="RHEA-COMP:10000"/>
        <dbReference type="Rhea" id="RHEA-COMP:10001"/>
        <dbReference type="Rhea" id="RHEA-COMP:10162"/>
        <dbReference type="Rhea" id="RHEA-COMP:10485"/>
        <dbReference type="ChEBI" id="CHEBI:17319"/>
        <dbReference type="ChEBI" id="CHEBI:33737"/>
        <dbReference type="ChEBI" id="CHEBI:33738"/>
        <dbReference type="ChEBI" id="CHEBI:57844"/>
        <dbReference type="ChEBI" id="CHEBI:57856"/>
        <dbReference type="ChEBI" id="CHEBI:59789"/>
        <dbReference type="ChEBI" id="CHEBI:74411"/>
        <dbReference type="ChEBI" id="CHEBI:74497"/>
        <dbReference type="EC" id="2.1.1.192"/>
    </reaction>
</comment>
<comment type="cofactor">
    <cofactor evidence="1">
        <name>[4Fe-4S] cluster</name>
        <dbReference type="ChEBI" id="CHEBI:49883"/>
    </cofactor>
    <text evidence="1">Binds 1 [4Fe-4S] cluster. The cluster is coordinated with 3 cysteines and an exchangeable S-adenosyl-L-methionine.</text>
</comment>
<comment type="subcellular location">
    <subcellularLocation>
        <location evidence="1">Cytoplasm</location>
    </subcellularLocation>
</comment>
<comment type="miscellaneous">
    <text evidence="1">Reaction proceeds by a ping-pong mechanism involving intermediate methylation of a conserved cysteine residue.</text>
</comment>
<comment type="similarity">
    <text evidence="1">Belongs to the radical SAM superfamily. RlmN family.</text>
</comment>
<sequence length="373" mass="41626">MSEKKINLLDLDRKGLRALFTEMGEKPFRADQLMKWIYHFGVSDFEEMTNINKVLRSKLAERCVIVAPEIASFQKSADGTIKFAINVGQGQEVETVYIPEDDRATLCVSSQVGCALECTFCSTGQQGFNRNLTVSEIVGQIWRVAQFLGFVKTTGERPITNVVMMGMGEPLLNLKNVIPAMDIMLDDFGFSLSKRRVTLSTSGVVPALDILGDSIDVALAVSIHAPNDELRDILVPVNKKYPLAEFLGGIRRYIAKSNANRGRVTVEYVMLDHINDSTEQAHELAKLMKDTPCKVNLIPFNPYPGSPYGRSSNSRIDRFSKVLMEYGFTVIVRKTRGDDIDAACGQLAGDIRDRTKRLAKKRMQENQISVTMD</sequence>
<keyword id="KW-0004">4Fe-4S</keyword>
<keyword id="KW-0963">Cytoplasm</keyword>
<keyword id="KW-1015">Disulfide bond</keyword>
<keyword id="KW-0408">Iron</keyword>
<keyword id="KW-0411">Iron-sulfur</keyword>
<keyword id="KW-0479">Metal-binding</keyword>
<keyword id="KW-0489">Methyltransferase</keyword>
<keyword id="KW-1185">Reference proteome</keyword>
<keyword id="KW-0698">rRNA processing</keyword>
<keyword id="KW-0949">S-adenosyl-L-methionine</keyword>
<keyword id="KW-0808">Transferase</keyword>
<keyword id="KW-0819">tRNA processing</keyword>
<feature type="chain" id="PRO_0000350396" description="Dual-specificity RNA methyltransferase RlmN">
    <location>
        <begin position="1"/>
        <end position="373"/>
    </location>
</feature>
<feature type="domain" description="Radical SAM core" evidence="2">
    <location>
        <begin position="100"/>
        <end position="339"/>
    </location>
</feature>
<feature type="active site" description="Proton acceptor" evidence="1">
    <location>
        <position position="94"/>
    </location>
</feature>
<feature type="active site" description="S-methylcysteine intermediate" evidence="1">
    <location>
        <position position="344"/>
    </location>
</feature>
<feature type="binding site" evidence="1">
    <location>
        <position position="114"/>
    </location>
    <ligand>
        <name>[4Fe-4S] cluster</name>
        <dbReference type="ChEBI" id="CHEBI:49883"/>
        <note>4Fe-4S-S-AdoMet</note>
    </ligand>
</feature>
<feature type="binding site" evidence="1">
    <location>
        <position position="118"/>
    </location>
    <ligand>
        <name>[4Fe-4S] cluster</name>
        <dbReference type="ChEBI" id="CHEBI:49883"/>
        <note>4Fe-4S-S-AdoMet</note>
    </ligand>
</feature>
<feature type="binding site" evidence="1">
    <location>
        <position position="121"/>
    </location>
    <ligand>
        <name>[4Fe-4S] cluster</name>
        <dbReference type="ChEBI" id="CHEBI:49883"/>
        <note>4Fe-4S-S-AdoMet</note>
    </ligand>
</feature>
<feature type="binding site" evidence="1">
    <location>
        <begin position="168"/>
        <end position="169"/>
    </location>
    <ligand>
        <name>S-adenosyl-L-methionine</name>
        <dbReference type="ChEBI" id="CHEBI:59789"/>
    </ligand>
</feature>
<feature type="binding site" evidence="1">
    <location>
        <position position="200"/>
    </location>
    <ligand>
        <name>S-adenosyl-L-methionine</name>
        <dbReference type="ChEBI" id="CHEBI:59789"/>
    </ligand>
</feature>
<feature type="binding site" evidence="1">
    <location>
        <begin position="222"/>
        <end position="224"/>
    </location>
    <ligand>
        <name>S-adenosyl-L-methionine</name>
        <dbReference type="ChEBI" id="CHEBI:59789"/>
    </ligand>
</feature>
<feature type="binding site" evidence="1">
    <location>
        <position position="301"/>
    </location>
    <ligand>
        <name>S-adenosyl-L-methionine</name>
        <dbReference type="ChEBI" id="CHEBI:59789"/>
    </ligand>
</feature>
<feature type="disulfide bond" description="(transient)" evidence="1">
    <location>
        <begin position="107"/>
        <end position="344"/>
    </location>
</feature>
<dbReference type="EC" id="2.1.1.192" evidence="1"/>
<dbReference type="EMBL" id="CP000302">
    <property type="protein sequence ID" value="ABE54539.1"/>
    <property type="molecule type" value="Genomic_DNA"/>
</dbReference>
<dbReference type="RefSeq" id="WP_011495698.1">
    <property type="nucleotide sequence ID" value="NC_007954.1"/>
</dbReference>
<dbReference type="SMR" id="Q12PT7"/>
<dbReference type="STRING" id="318161.Sden_1253"/>
<dbReference type="KEGG" id="sdn:Sden_1253"/>
<dbReference type="eggNOG" id="COG0820">
    <property type="taxonomic scope" value="Bacteria"/>
</dbReference>
<dbReference type="HOGENOM" id="CLU_029101_0_0_6"/>
<dbReference type="OrthoDB" id="9793973at2"/>
<dbReference type="Proteomes" id="UP000001982">
    <property type="component" value="Chromosome"/>
</dbReference>
<dbReference type="GO" id="GO:0005737">
    <property type="term" value="C:cytoplasm"/>
    <property type="evidence" value="ECO:0007669"/>
    <property type="project" value="UniProtKB-SubCell"/>
</dbReference>
<dbReference type="GO" id="GO:0051539">
    <property type="term" value="F:4 iron, 4 sulfur cluster binding"/>
    <property type="evidence" value="ECO:0007669"/>
    <property type="project" value="UniProtKB-UniRule"/>
</dbReference>
<dbReference type="GO" id="GO:0046872">
    <property type="term" value="F:metal ion binding"/>
    <property type="evidence" value="ECO:0007669"/>
    <property type="project" value="UniProtKB-KW"/>
</dbReference>
<dbReference type="GO" id="GO:0070040">
    <property type="term" value="F:rRNA (adenine(2503)-C2-)-methyltransferase activity"/>
    <property type="evidence" value="ECO:0007669"/>
    <property type="project" value="UniProtKB-UniRule"/>
</dbReference>
<dbReference type="GO" id="GO:0019843">
    <property type="term" value="F:rRNA binding"/>
    <property type="evidence" value="ECO:0007669"/>
    <property type="project" value="UniProtKB-UniRule"/>
</dbReference>
<dbReference type="GO" id="GO:0002935">
    <property type="term" value="F:tRNA (adenine(37)-C2)-methyltransferase activity"/>
    <property type="evidence" value="ECO:0007669"/>
    <property type="project" value="UniProtKB-UniRule"/>
</dbReference>
<dbReference type="GO" id="GO:0000049">
    <property type="term" value="F:tRNA binding"/>
    <property type="evidence" value="ECO:0007669"/>
    <property type="project" value="UniProtKB-UniRule"/>
</dbReference>
<dbReference type="GO" id="GO:0070475">
    <property type="term" value="P:rRNA base methylation"/>
    <property type="evidence" value="ECO:0007669"/>
    <property type="project" value="UniProtKB-UniRule"/>
</dbReference>
<dbReference type="GO" id="GO:0030488">
    <property type="term" value="P:tRNA methylation"/>
    <property type="evidence" value="ECO:0007669"/>
    <property type="project" value="UniProtKB-UniRule"/>
</dbReference>
<dbReference type="CDD" id="cd01335">
    <property type="entry name" value="Radical_SAM"/>
    <property type="match status" value="1"/>
</dbReference>
<dbReference type="FunFam" id="1.10.150.530:FF:000003">
    <property type="entry name" value="Dual-specificity RNA methyltransferase RlmN"/>
    <property type="match status" value="1"/>
</dbReference>
<dbReference type="FunFam" id="3.20.20.70:FF:000008">
    <property type="entry name" value="Dual-specificity RNA methyltransferase RlmN"/>
    <property type="match status" value="1"/>
</dbReference>
<dbReference type="Gene3D" id="1.10.150.530">
    <property type="match status" value="1"/>
</dbReference>
<dbReference type="Gene3D" id="3.20.20.70">
    <property type="entry name" value="Aldolase class I"/>
    <property type="match status" value="1"/>
</dbReference>
<dbReference type="HAMAP" id="MF_01849">
    <property type="entry name" value="RNA_methyltr_RlmN"/>
    <property type="match status" value="1"/>
</dbReference>
<dbReference type="InterPro" id="IPR013785">
    <property type="entry name" value="Aldolase_TIM"/>
</dbReference>
<dbReference type="InterPro" id="IPR040072">
    <property type="entry name" value="Methyltransferase_A"/>
</dbReference>
<dbReference type="InterPro" id="IPR048641">
    <property type="entry name" value="RlmN_N"/>
</dbReference>
<dbReference type="InterPro" id="IPR027492">
    <property type="entry name" value="RNA_MTrfase_RlmN"/>
</dbReference>
<dbReference type="InterPro" id="IPR004383">
    <property type="entry name" value="rRNA_lsu_MTrfase_RlmN/Cfr"/>
</dbReference>
<dbReference type="InterPro" id="IPR007197">
    <property type="entry name" value="rSAM"/>
</dbReference>
<dbReference type="NCBIfam" id="NF008396">
    <property type="entry name" value="PRK11194.1"/>
    <property type="match status" value="1"/>
</dbReference>
<dbReference type="NCBIfam" id="TIGR00048">
    <property type="entry name" value="rRNA_mod_RlmN"/>
    <property type="match status" value="1"/>
</dbReference>
<dbReference type="PANTHER" id="PTHR30544">
    <property type="entry name" value="23S RRNA METHYLTRANSFERASE"/>
    <property type="match status" value="1"/>
</dbReference>
<dbReference type="PANTHER" id="PTHR30544:SF5">
    <property type="entry name" value="RADICAL SAM CORE DOMAIN-CONTAINING PROTEIN"/>
    <property type="match status" value="1"/>
</dbReference>
<dbReference type="Pfam" id="PF04055">
    <property type="entry name" value="Radical_SAM"/>
    <property type="match status" value="1"/>
</dbReference>
<dbReference type="Pfam" id="PF21016">
    <property type="entry name" value="RlmN_N"/>
    <property type="match status" value="1"/>
</dbReference>
<dbReference type="PIRSF" id="PIRSF006004">
    <property type="entry name" value="CHP00048"/>
    <property type="match status" value="1"/>
</dbReference>
<dbReference type="SFLD" id="SFLDF00275">
    <property type="entry name" value="adenosine_C2_methyltransferase"/>
    <property type="match status" value="1"/>
</dbReference>
<dbReference type="SFLD" id="SFLDG01062">
    <property type="entry name" value="methyltransferase_(Class_A)"/>
    <property type="match status" value="1"/>
</dbReference>
<dbReference type="SUPFAM" id="SSF102114">
    <property type="entry name" value="Radical SAM enzymes"/>
    <property type="match status" value="1"/>
</dbReference>
<dbReference type="PROSITE" id="PS51918">
    <property type="entry name" value="RADICAL_SAM"/>
    <property type="match status" value="1"/>
</dbReference>
<evidence type="ECO:0000255" key="1">
    <source>
        <dbReference type="HAMAP-Rule" id="MF_01849"/>
    </source>
</evidence>
<evidence type="ECO:0000255" key="2">
    <source>
        <dbReference type="PROSITE-ProRule" id="PRU01266"/>
    </source>
</evidence>
<reference key="1">
    <citation type="submission" date="2006-03" db="EMBL/GenBank/DDBJ databases">
        <title>Complete sequence of Shewanella denitrificans OS217.</title>
        <authorList>
            <consortium name="US DOE Joint Genome Institute"/>
            <person name="Copeland A."/>
            <person name="Lucas S."/>
            <person name="Lapidus A."/>
            <person name="Barry K."/>
            <person name="Detter J.C."/>
            <person name="Glavina del Rio T."/>
            <person name="Hammon N."/>
            <person name="Israni S."/>
            <person name="Dalin E."/>
            <person name="Tice H."/>
            <person name="Pitluck S."/>
            <person name="Brettin T."/>
            <person name="Bruce D."/>
            <person name="Han C."/>
            <person name="Tapia R."/>
            <person name="Gilna P."/>
            <person name="Kiss H."/>
            <person name="Schmutz J."/>
            <person name="Larimer F."/>
            <person name="Land M."/>
            <person name="Hauser L."/>
            <person name="Kyrpides N."/>
            <person name="Lykidis A."/>
            <person name="Richardson P."/>
        </authorList>
    </citation>
    <scope>NUCLEOTIDE SEQUENCE [LARGE SCALE GENOMIC DNA]</scope>
    <source>
        <strain>OS217 / ATCC BAA-1090 / DSM 15013</strain>
    </source>
</reference>
<organism>
    <name type="scientific">Shewanella denitrificans (strain OS217 / ATCC BAA-1090 / DSM 15013)</name>
    <dbReference type="NCBI Taxonomy" id="318161"/>
    <lineage>
        <taxon>Bacteria</taxon>
        <taxon>Pseudomonadati</taxon>
        <taxon>Pseudomonadota</taxon>
        <taxon>Gammaproteobacteria</taxon>
        <taxon>Alteromonadales</taxon>
        <taxon>Shewanellaceae</taxon>
        <taxon>Shewanella</taxon>
    </lineage>
</organism>